<evidence type="ECO:0000255" key="1">
    <source>
        <dbReference type="PROSITE-ProRule" id="PRU01007"/>
    </source>
</evidence>
<evidence type="ECO:0000269" key="2">
    <source>
    </source>
</evidence>
<evidence type="ECO:0000305" key="3"/>
<sequence>MKVVKFGGSSLASGAQLDKVFHIVTSDPARKAVVVSAPGKHYAEDTKVTDLLIACAEQYLATGSAPELAEAVVERYALIANELQLGQSIIEKIRDDLFTLLEGDKSNPEQYLDAVKASGEDNNAKLIAAYFRYKGVKAEYVNPKDAGLFVTNEPGNAQVLPESYQNLYRLRERDGLIIFPGFFGFSKDGDVITFSRSGSDITGSILANGLQADLYENFTDVDAVYSVNPSFVENPKEISELTYREMRELSYAGFSVFHDEALIPAFRAGIPVQIKNTNNPSAEGTRVVSKRDNTNGPVVGIASDTGFCSIYISKYLMNREIGFGRRALQILEEHGLTYEHVPSGIDDMTIILRQGQMDAATERSVIKRIEEDLHADEVIVEHHLALIMVVGEAMRHNVGTTARAAKALSEAQVNIEMINQGSSEVSMMFGVKEAEERKAVQALYQEFFAGVLIS</sequence>
<protein>
    <recommendedName>
        <fullName>Aspartokinase 3</fullName>
        <ecNumber>2.7.2.4</ecNumber>
    </recommendedName>
    <alternativeName>
        <fullName>Aspartate kinase 3</fullName>
    </alternativeName>
    <alternativeName>
        <fullName>Aspartokinase III</fullName>
    </alternativeName>
</protein>
<comment type="function">
    <text evidence="2">Catalyzes the phosphorylation of the beta-carboxyl group of aspartic acid with ATP to yield 4-phospho-L-aspartate, which is involved in the branched biosynthetic pathway leading to the biosynthesis of amino acids threonine, isoleucine and methionine.</text>
</comment>
<comment type="catalytic activity">
    <reaction evidence="2">
        <text>L-aspartate + ATP = 4-phospho-L-aspartate + ADP</text>
        <dbReference type="Rhea" id="RHEA:23776"/>
        <dbReference type="ChEBI" id="CHEBI:29991"/>
        <dbReference type="ChEBI" id="CHEBI:30616"/>
        <dbReference type="ChEBI" id="CHEBI:57535"/>
        <dbReference type="ChEBI" id="CHEBI:456216"/>
        <dbReference type="EC" id="2.7.2.4"/>
    </reaction>
</comment>
<comment type="biophysicochemical properties">
    <kinetics>
        <KM evidence="2">3.5 mM for ATP (at 25 degrees Celsius)</KM>
        <KM evidence="2">21 mM for aspartate (at 25 degrees Celsius)</KM>
        <text>kcat is 1200 sec(-1).</text>
    </kinetics>
</comment>
<comment type="pathway">
    <text>Amino-acid biosynthesis; L-lysine biosynthesis via DAP pathway; (S)-tetrahydrodipicolinate from L-aspartate: step 1/4.</text>
</comment>
<comment type="pathway">
    <text>Amino-acid biosynthesis; L-methionine biosynthesis via de novo pathway; L-homoserine from L-aspartate: step 1/3.</text>
</comment>
<comment type="pathway">
    <text>Amino-acid biosynthesis; L-threonine biosynthesis; L-threonine from L-aspartate: step 1/5.</text>
</comment>
<comment type="subunit">
    <text evidence="2">Monomer.</text>
</comment>
<comment type="similarity">
    <text evidence="3">Belongs to the aspartokinase family.</text>
</comment>
<organism>
    <name type="scientific">Bacillus subtilis (strain 168)</name>
    <dbReference type="NCBI Taxonomy" id="224308"/>
    <lineage>
        <taxon>Bacteria</taxon>
        <taxon>Bacillati</taxon>
        <taxon>Bacillota</taxon>
        <taxon>Bacilli</taxon>
        <taxon>Bacillales</taxon>
        <taxon>Bacillaceae</taxon>
        <taxon>Bacillus</taxon>
    </lineage>
</organism>
<reference key="1">
    <citation type="journal article" date="1996" name="Microbiology">
        <title>The 25 degrees-36 degrees region of the Bacillus subtilis chromosome: determination of the sequence of a 146 kb segment and identification of 113 genes.</title>
        <authorList>
            <person name="Yamane K."/>
            <person name="Kumano M."/>
            <person name="Kurita K."/>
        </authorList>
    </citation>
    <scope>NUCLEOTIDE SEQUENCE [GENOMIC DNA]</scope>
    <source>
        <strain>168</strain>
    </source>
</reference>
<reference key="2">
    <citation type="journal article" date="1997" name="Nature">
        <title>The complete genome sequence of the Gram-positive bacterium Bacillus subtilis.</title>
        <authorList>
            <person name="Kunst F."/>
            <person name="Ogasawara N."/>
            <person name="Moszer I."/>
            <person name="Albertini A.M."/>
            <person name="Alloni G."/>
            <person name="Azevedo V."/>
            <person name="Bertero M.G."/>
            <person name="Bessieres P."/>
            <person name="Bolotin A."/>
            <person name="Borchert S."/>
            <person name="Borriss R."/>
            <person name="Boursier L."/>
            <person name="Brans A."/>
            <person name="Braun M."/>
            <person name="Brignell S.C."/>
            <person name="Bron S."/>
            <person name="Brouillet S."/>
            <person name="Bruschi C.V."/>
            <person name="Caldwell B."/>
            <person name="Capuano V."/>
            <person name="Carter N.M."/>
            <person name="Choi S.-K."/>
            <person name="Codani J.-J."/>
            <person name="Connerton I.F."/>
            <person name="Cummings N.J."/>
            <person name="Daniel R.A."/>
            <person name="Denizot F."/>
            <person name="Devine K.M."/>
            <person name="Duesterhoeft A."/>
            <person name="Ehrlich S.D."/>
            <person name="Emmerson P.T."/>
            <person name="Entian K.-D."/>
            <person name="Errington J."/>
            <person name="Fabret C."/>
            <person name="Ferrari E."/>
            <person name="Foulger D."/>
            <person name="Fritz C."/>
            <person name="Fujita M."/>
            <person name="Fujita Y."/>
            <person name="Fuma S."/>
            <person name="Galizzi A."/>
            <person name="Galleron N."/>
            <person name="Ghim S.-Y."/>
            <person name="Glaser P."/>
            <person name="Goffeau A."/>
            <person name="Golightly E.J."/>
            <person name="Grandi G."/>
            <person name="Guiseppi G."/>
            <person name="Guy B.J."/>
            <person name="Haga K."/>
            <person name="Haiech J."/>
            <person name="Harwood C.R."/>
            <person name="Henaut A."/>
            <person name="Hilbert H."/>
            <person name="Holsappel S."/>
            <person name="Hosono S."/>
            <person name="Hullo M.-F."/>
            <person name="Itaya M."/>
            <person name="Jones L.-M."/>
            <person name="Joris B."/>
            <person name="Karamata D."/>
            <person name="Kasahara Y."/>
            <person name="Klaerr-Blanchard M."/>
            <person name="Klein C."/>
            <person name="Kobayashi Y."/>
            <person name="Koetter P."/>
            <person name="Koningstein G."/>
            <person name="Krogh S."/>
            <person name="Kumano M."/>
            <person name="Kurita K."/>
            <person name="Lapidus A."/>
            <person name="Lardinois S."/>
            <person name="Lauber J."/>
            <person name="Lazarevic V."/>
            <person name="Lee S.-M."/>
            <person name="Levine A."/>
            <person name="Liu H."/>
            <person name="Masuda S."/>
            <person name="Mauel C."/>
            <person name="Medigue C."/>
            <person name="Medina N."/>
            <person name="Mellado R.P."/>
            <person name="Mizuno M."/>
            <person name="Moestl D."/>
            <person name="Nakai S."/>
            <person name="Noback M."/>
            <person name="Noone D."/>
            <person name="O'Reilly M."/>
            <person name="Ogawa K."/>
            <person name="Ogiwara A."/>
            <person name="Oudega B."/>
            <person name="Park S.-H."/>
            <person name="Parro V."/>
            <person name="Pohl T.M."/>
            <person name="Portetelle D."/>
            <person name="Porwollik S."/>
            <person name="Prescott A.M."/>
            <person name="Presecan E."/>
            <person name="Pujic P."/>
            <person name="Purnelle B."/>
            <person name="Rapoport G."/>
            <person name="Rey M."/>
            <person name="Reynolds S."/>
            <person name="Rieger M."/>
            <person name="Rivolta C."/>
            <person name="Rocha E."/>
            <person name="Roche B."/>
            <person name="Rose M."/>
            <person name="Sadaie Y."/>
            <person name="Sato T."/>
            <person name="Scanlan E."/>
            <person name="Schleich S."/>
            <person name="Schroeter R."/>
            <person name="Scoffone F."/>
            <person name="Sekiguchi J."/>
            <person name="Sekowska A."/>
            <person name="Seror S.J."/>
            <person name="Serror P."/>
            <person name="Shin B.-S."/>
            <person name="Soldo B."/>
            <person name="Sorokin A."/>
            <person name="Tacconi E."/>
            <person name="Takagi T."/>
            <person name="Takahashi H."/>
            <person name="Takemaru K."/>
            <person name="Takeuchi M."/>
            <person name="Tamakoshi A."/>
            <person name="Tanaka T."/>
            <person name="Terpstra P."/>
            <person name="Tognoni A."/>
            <person name="Tosato V."/>
            <person name="Uchiyama S."/>
            <person name="Vandenbol M."/>
            <person name="Vannier F."/>
            <person name="Vassarotti A."/>
            <person name="Viari A."/>
            <person name="Wambutt R."/>
            <person name="Wedler E."/>
            <person name="Wedler H."/>
            <person name="Weitzenegger T."/>
            <person name="Winters P."/>
            <person name="Wipat A."/>
            <person name="Yamamoto H."/>
            <person name="Yamane K."/>
            <person name="Yasumoto K."/>
            <person name="Yata K."/>
            <person name="Yoshida K."/>
            <person name="Yoshikawa H.-F."/>
            <person name="Zumstein E."/>
            <person name="Yoshikawa H."/>
            <person name="Danchin A."/>
        </authorList>
    </citation>
    <scope>NUCLEOTIDE SEQUENCE [LARGE SCALE GENOMIC DNA]</scope>
    <source>
        <strain>168</strain>
    </source>
</reference>
<reference key="3">
    <citation type="journal article" date="2001" name="Biosci. Biotechnol. Biochem.">
        <title>Characterization of aspartate kinase III of Bacillus subtilis.</title>
        <authorList>
            <person name="Kobashi N."/>
            <person name="Nishiyama M."/>
            <person name="Yamane H."/>
        </authorList>
    </citation>
    <scope>FUNCTION</scope>
    <scope>CATALYTIC ACTIVITY</scope>
    <scope>BIOPHYSICOCHEMICAL PROPERTIES</scope>
    <scope>SUBUNIT</scope>
</reference>
<gene>
    <name type="primary">yclM</name>
    <name type="ordered locus">BSU03790</name>
</gene>
<keyword id="KW-0028">Amino-acid biosynthesis</keyword>
<keyword id="KW-0067">ATP-binding</keyword>
<keyword id="KW-0220">Diaminopimelate biosynthesis</keyword>
<keyword id="KW-0418">Kinase</keyword>
<keyword id="KW-0457">Lysine biosynthesis</keyword>
<keyword id="KW-0547">Nucleotide-binding</keyword>
<keyword id="KW-1185">Reference proteome</keyword>
<keyword id="KW-0677">Repeat</keyword>
<keyword id="KW-0808">Transferase</keyword>
<accession>P94417</accession>
<feature type="chain" id="PRO_0000066672" description="Aspartokinase 3">
    <location>
        <begin position="1"/>
        <end position="454"/>
    </location>
</feature>
<feature type="domain" description="ACT 1" evidence="1">
    <location>
        <begin position="312"/>
        <end position="388"/>
    </location>
</feature>
<feature type="domain" description="ACT 2" evidence="1">
    <location>
        <begin position="389"/>
        <end position="454"/>
    </location>
</feature>
<proteinExistence type="evidence at protein level"/>
<name>AK3_BACSU</name>
<dbReference type="EC" id="2.7.2.4"/>
<dbReference type="EMBL" id="D50453">
    <property type="protein sequence ID" value="BAA09011.1"/>
    <property type="molecule type" value="Genomic_DNA"/>
</dbReference>
<dbReference type="EMBL" id="AL009126">
    <property type="protein sequence ID" value="CAB12187.1"/>
    <property type="molecule type" value="Genomic_DNA"/>
</dbReference>
<dbReference type="PIR" id="A69763">
    <property type="entry name" value="A69763"/>
</dbReference>
<dbReference type="RefSeq" id="WP_009966541.1">
    <property type="nucleotide sequence ID" value="NZ_OZ025638.1"/>
</dbReference>
<dbReference type="SMR" id="P94417"/>
<dbReference type="FunCoup" id="P94417">
    <property type="interactions" value="236"/>
</dbReference>
<dbReference type="IntAct" id="P94417">
    <property type="interactions" value="1"/>
</dbReference>
<dbReference type="STRING" id="224308.BSU03790"/>
<dbReference type="PaxDb" id="224308-BSU03790"/>
<dbReference type="DNASU" id="938276"/>
<dbReference type="EnsemblBacteria" id="CAB12187">
    <property type="protein sequence ID" value="CAB12187"/>
    <property type="gene ID" value="BSU_03790"/>
</dbReference>
<dbReference type="GeneID" id="938276"/>
<dbReference type="KEGG" id="bsu:BSU03790"/>
<dbReference type="PATRIC" id="fig|224308.179.peg.401"/>
<dbReference type="eggNOG" id="COG0527">
    <property type="taxonomic scope" value="Bacteria"/>
</dbReference>
<dbReference type="InParanoid" id="P94417"/>
<dbReference type="OrthoDB" id="9799110at2"/>
<dbReference type="PhylomeDB" id="P94417"/>
<dbReference type="BioCyc" id="BSUB:BSU03790-MONOMER"/>
<dbReference type="BioCyc" id="MetaCyc:MONOMER-6563"/>
<dbReference type="UniPathway" id="UPA00034">
    <property type="reaction ID" value="UER00015"/>
</dbReference>
<dbReference type="UniPathway" id="UPA00050">
    <property type="reaction ID" value="UER00461"/>
</dbReference>
<dbReference type="UniPathway" id="UPA00051">
    <property type="reaction ID" value="UER00462"/>
</dbReference>
<dbReference type="Proteomes" id="UP000001570">
    <property type="component" value="Chromosome"/>
</dbReference>
<dbReference type="GO" id="GO:0005829">
    <property type="term" value="C:cytosol"/>
    <property type="evidence" value="ECO:0000318"/>
    <property type="project" value="GO_Central"/>
</dbReference>
<dbReference type="GO" id="GO:0004072">
    <property type="term" value="F:aspartate kinase activity"/>
    <property type="evidence" value="ECO:0000314"/>
    <property type="project" value="UniProtKB"/>
</dbReference>
<dbReference type="GO" id="GO:0005524">
    <property type="term" value="F:ATP binding"/>
    <property type="evidence" value="ECO:0000314"/>
    <property type="project" value="UniProtKB"/>
</dbReference>
<dbReference type="GO" id="GO:0019877">
    <property type="term" value="P:diaminopimelate biosynthetic process"/>
    <property type="evidence" value="ECO:0007669"/>
    <property type="project" value="UniProtKB-KW"/>
</dbReference>
<dbReference type="GO" id="GO:0009090">
    <property type="term" value="P:homoserine biosynthetic process"/>
    <property type="evidence" value="ECO:0000318"/>
    <property type="project" value="GO_Central"/>
</dbReference>
<dbReference type="GO" id="GO:0009089">
    <property type="term" value="P:lysine biosynthetic process via diaminopimelate"/>
    <property type="evidence" value="ECO:0000318"/>
    <property type="project" value="GO_Central"/>
</dbReference>
<dbReference type="GO" id="GO:0009088">
    <property type="term" value="P:threonine biosynthetic process"/>
    <property type="evidence" value="ECO:0007669"/>
    <property type="project" value="UniProtKB-UniPathway"/>
</dbReference>
<dbReference type="CDD" id="cd04245">
    <property type="entry name" value="AAK_AKiii-YclM-BS"/>
    <property type="match status" value="1"/>
</dbReference>
<dbReference type="CDD" id="cd04911">
    <property type="entry name" value="ACT_AKiii-YclM-BS_1"/>
    <property type="match status" value="1"/>
</dbReference>
<dbReference type="CDD" id="cd04916">
    <property type="entry name" value="ACT_AKiii-YclM-BS_2"/>
    <property type="match status" value="1"/>
</dbReference>
<dbReference type="FunFam" id="3.40.1160.10:FF:000027">
    <property type="entry name" value="Aspartokinase"/>
    <property type="match status" value="1"/>
</dbReference>
<dbReference type="FunFam" id="3.30.2130.10:FF:000001">
    <property type="entry name" value="Bifunctional aspartokinase/homoserine dehydrogenase"/>
    <property type="match status" value="1"/>
</dbReference>
<dbReference type="Gene3D" id="3.40.1160.10">
    <property type="entry name" value="Acetylglutamate kinase-like"/>
    <property type="match status" value="1"/>
</dbReference>
<dbReference type="Gene3D" id="1.20.120.1320">
    <property type="entry name" value="Aspartokinase, catalytic domain"/>
    <property type="match status" value="1"/>
</dbReference>
<dbReference type="Gene3D" id="3.30.2130.10">
    <property type="entry name" value="VC0802-like"/>
    <property type="match status" value="1"/>
</dbReference>
<dbReference type="InterPro" id="IPR036393">
    <property type="entry name" value="AceGlu_kinase-like_sf"/>
</dbReference>
<dbReference type="InterPro" id="IPR045865">
    <property type="entry name" value="ACT-like_dom_sf"/>
</dbReference>
<dbReference type="InterPro" id="IPR054352">
    <property type="entry name" value="ACT_Aspartokinase"/>
</dbReference>
<dbReference type="InterPro" id="IPR002912">
    <property type="entry name" value="ACT_dom"/>
</dbReference>
<dbReference type="InterPro" id="IPR035804">
    <property type="entry name" value="AKIII_YclM_N"/>
</dbReference>
<dbReference type="InterPro" id="IPR001048">
    <property type="entry name" value="Asp/Glu/Uridylate_kinase"/>
</dbReference>
<dbReference type="InterPro" id="IPR005260">
    <property type="entry name" value="Asp_kin_monofn"/>
</dbReference>
<dbReference type="InterPro" id="IPR001341">
    <property type="entry name" value="Asp_kinase"/>
</dbReference>
<dbReference type="InterPro" id="IPR042199">
    <property type="entry name" value="AsparK_Bifunc_asparK/hSer_DH"/>
</dbReference>
<dbReference type="InterPro" id="IPR018042">
    <property type="entry name" value="Aspartate_kinase_CS"/>
</dbReference>
<dbReference type="NCBIfam" id="TIGR00657">
    <property type="entry name" value="asp_kinases"/>
    <property type="match status" value="1"/>
</dbReference>
<dbReference type="NCBIfam" id="NF006540">
    <property type="entry name" value="PRK09034.1"/>
    <property type="match status" value="1"/>
</dbReference>
<dbReference type="PANTHER" id="PTHR21499">
    <property type="entry name" value="ASPARTATE KINASE"/>
    <property type="match status" value="1"/>
</dbReference>
<dbReference type="PANTHER" id="PTHR21499:SF67">
    <property type="entry name" value="ASPARTOKINASE 3"/>
    <property type="match status" value="1"/>
</dbReference>
<dbReference type="Pfam" id="PF00696">
    <property type="entry name" value="AA_kinase"/>
    <property type="match status" value="1"/>
</dbReference>
<dbReference type="Pfam" id="PF22468">
    <property type="entry name" value="ACT_9"/>
    <property type="match status" value="1"/>
</dbReference>
<dbReference type="PIRSF" id="PIRSF000726">
    <property type="entry name" value="Asp_kin"/>
    <property type="match status" value="1"/>
</dbReference>
<dbReference type="SUPFAM" id="SSF55021">
    <property type="entry name" value="ACT-like"/>
    <property type="match status" value="2"/>
</dbReference>
<dbReference type="SUPFAM" id="SSF53633">
    <property type="entry name" value="Carbamate kinase-like"/>
    <property type="match status" value="1"/>
</dbReference>
<dbReference type="PROSITE" id="PS51671">
    <property type="entry name" value="ACT"/>
    <property type="match status" value="1"/>
</dbReference>
<dbReference type="PROSITE" id="PS00324">
    <property type="entry name" value="ASPARTOKINASE"/>
    <property type="match status" value="1"/>
</dbReference>